<evidence type="ECO:0000255" key="1">
    <source>
        <dbReference type="HAMAP-Rule" id="MF_01346"/>
    </source>
</evidence>
<proteinExistence type="inferred from homology"/>
<organism>
    <name type="scientific">Pseudomonas fluorescens (strain Pf0-1)</name>
    <dbReference type="NCBI Taxonomy" id="205922"/>
    <lineage>
        <taxon>Bacteria</taxon>
        <taxon>Pseudomonadati</taxon>
        <taxon>Pseudomonadota</taxon>
        <taxon>Gammaproteobacteria</taxon>
        <taxon>Pseudomonadales</taxon>
        <taxon>Pseudomonadaceae</taxon>
        <taxon>Pseudomonas</taxon>
    </lineage>
</organism>
<protein>
    <recommendedName>
        <fullName evidence="1">ATP synthase subunit alpha</fullName>
        <ecNumber evidence="1">7.1.2.2</ecNumber>
    </recommendedName>
    <alternativeName>
        <fullName evidence="1">ATP synthase F1 sector subunit alpha</fullName>
    </alternativeName>
    <alternativeName>
        <fullName evidence="1">F-ATPase subunit alpha</fullName>
    </alternativeName>
</protein>
<accession>Q3K439</accession>
<gene>
    <name evidence="1" type="primary">atpA</name>
    <name type="ordered locus">Pfl01_5732</name>
</gene>
<dbReference type="EC" id="7.1.2.2" evidence="1"/>
<dbReference type="EMBL" id="CP000094">
    <property type="protein sequence ID" value="ABA77465.1"/>
    <property type="molecule type" value="Genomic_DNA"/>
</dbReference>
<dbReference type="RefSeq" id="WP_011336716.1">
    <property type="nucleotide sequence ID" value="NC_007492.2"/>
</dbReference>
<dbReference type="SMR" id="Q3K439"/>
<dbReference type="KEGG" id="pfo:Pfl01_5732"/>
<dbReference type="eggNOG" id="COG0056">
    <property type="taxonomic scope" value="Bacteria"/>
</dbReference>
<dbReference type="HOGENOM" id="CLU_010091_2_1_6"/>
<dbReference type="Proteomes" id="UP000002704">
    <property type="component" value="Chromosome"/>
</dbReference>
<dbReference type="GO" id="GO:0005886">
    <property type="term" value="C:plasma membrane"/>
    <property type="evidence" value="ECO:0007669"/>
    <property type="project" value="UniProtKB-SubCell"/>
</dbReference>
<dbReference type="GO" id="GO:0045259">
    <property type="term" value="C:proton-transporting ATP synthase complex"/>
    <property type="evidence" value="ECO:0007669"/>
    <property type="project" value="UniProtKB-KW"/>
</dbReference>
<dbReference type="GO" id="GO:0043531">
    <property type="term" value="F:ADP binding"/>
    <property type="evidence" value="ECO:0007669"/>
    <property type="project" value="TreeGrafter"/>
</dbReference>
<dbReference type="GO" id="GO:0005524">
    <property type="term" value="F:ATP binding"/>
    <property type="evidence" value="ECO:0007669"/>
    <property type="project" value="UniProtKB-UniRule"/>
</dbReference>
<dbReference type="GO" id="GO:0046933">
    <property type="term" value="F:proton-transporting ATP synthase activity, rotational mechanism"/>
    <property type="evidence" value="ECO:0007669"/>
    <property type="project" value="UniProtKB-UniRule"/>
</dbReference>
<dbReference type="CDD" id="cd18113">
    <property type="entry name" value="ATP-synt_F1_alpha_C"/>
    <property type="match status" value="1"/>
</dbReference>
<dbReference type="CDD" id="cd18116">
    <property type="entry name" value="ATP-synt_F1_alpha_N"/>
    <property type="match status" value="1"/>
</dbReference>
<dbReference type="CDD" id="cd01132">
    <property type="entry name" value="F1-ATPase_alpha_CD"/>
    <property type="match status" value="1"/>
</dbReference>
<dbReference type="FunFam" id="1.20.150.20:FF:000001">
    <property type="entry name" value="ATP synthase subunit alpha"/>
    <property type="match status" value="1"/>
</dbReference>
<dbReference type="FunFam" id="2.40.30.20:FF:000001">
    <property type="entry name" value="ATP synthase subunit alpha"/>
    <property type="match status" value="1"/>
</dbReference>
<dbReference type="FunFam" id="3.40.50.300:FF:000002">
    <property type="entry name" value="ATP synthase subunit alpha"/>
    <property type="match status" value="1"/>
</dbReference>
<dbReference type="Gene3D" id="2.40.30.20">
    <property type="match status" value="1"/>
</dbReference>
<dbReference type="Gene3D" id="1.20.150.20">
    <property type="entry name" value="ATP synthase alpha/beta chain, C-terminal domain"/>
    <property type="match status" value="1"/>
</dbReference>
<dbReference type="Gene3D" id="3.40.50.300">
    <property type="entry name" value="P-loop containing nucleotide triphosphate hydrolases"/>
    <property type="match status" value="1"/>
</dbReference>
<dbReference type="HAMAP" id="MF_01346">
    <property type="entry name" value="ATP_synth_alpha_bact"/>
    <property type="match status" value="1"/>
</dbReference>
<dbReference type="InterPro" id="IPR023366">
    <property type="entry name" value="ATP_synth_asu-like_sf"/>
</dbReference>
<dbReference type="InterPro" id="IPR000793">
    <property type="entry name" value="ATP_synth_asu_C"/>
</dbReference>
<dbReference type="InterPro" id="IPR038376">
    <property type="entry name" value="ATP_synth_asu_C_sf"/>
</dbReference>
<dbReference type="InterPro" id="IPR033732">
    <property type="entry name" value="ATP_synth_F1_a_nt-bd_dom"/>
</dbReference>
<dbReference type="InterPro" id="IPR005294">
    <property type="entry name" value="ATP_synth_F1_asu"/>
</dbReference>
<dbReference type="InterPro" id="IPR020003">
    <property type="entry name" value="ATPase_a/bsu_AS"/>
</dbReference>
<dbReference type="InterPro" id="IPR004100">
    <property type="entry name" value="ATPase_F1/V1/A1_a/bsu_N"/>
</dbReference>
<dbReference type="InterPro" id="IPR036121">
    <property type="entry name" value="ATPase_F1/V1/A1_a/bsu_N_sf"/>
</dbReference>
<dbReference type="InterPro" id="IPR000194">
    <property type="entry name" value="ATPase_F1/V1/A1_a/bsu_nucl-bd"/>
</dbReference>
<dbReference type="InterPro" id="IPR027417">
    <property type="entry name" value="P-loop_NTPase"/>
</dbReference>
<dbReference type="NCBIfam" id="TIGR00962">
    <property type="entry name" value="atpA"/>
    <property type="match status" value="1"/>
</dbReference>
<dbReference type="NCBIfam" id="NF009884">
    <property type="entry name" value="PRK13343.1"/>
    <property type="match status" value="1"/>
</dbReference>
<dbReference type="PANTHER" id="PTHR48082">
    <property type="entry name" value="ATP SYNTHASE SUBUNIT ALPHA, MITOCHONDRIAL"/>
    <property type="match status" value="1"/>
</dbReference>
<dbReference type="PANTHER" id="PTHR48082:SF2">
    <property type="entry name" value="ATP SYNTHASE SUBUNIT ALPHA, MITOCHONDRIAL"/>
    <property type="match status" value="1"/>
</dbReference>
<dbReference type="Pfam" id="PF00006">
    <property type="entry name" value="ATP-synt_ab"/>
    <property type="match status" value="1"/>
</dbReference>
<dbReference type="Pfam" id="PF00306">
    <property type="entry name" value="ATP-synt_ab_C"/>
    <property type="match status" value="1"/>
</dbReference>
<dbReference type="Pfam" id="PF02874">
    <property type="entry name" value="ATP-synt_ab_N"/>
    <property type="match status" value="1"/>
</dbReference>
<dbReference type="PIRSF" id="PIRSF039088">
    <property type="entry name" value="F_ATPase_subunit_alpha"/>
    <property type="match status" value="1"/>
</dbReference>
<dbReference type="SUPFAM" id="SSF47917">
    <property type="entry name" value="C-terminal domain of alpha and beta subunits of F1 ATP synthase"/>
    <property type="match status" value="1"/>
</dbReference>
<dbReference type="SUPFAM" id="SSF50615">
    <property type="entry name" value="N-terminal domain of alpha and beta subunits of F1 ATP synthase"/>
    <property type="match status" value="1"/>
</dbReference>
<dbReference type="SUPFAM" id="SSF52540">
    <property type="entry name" value="P-loop containing nucleoside triphosphate hydrolases"/>
    <property type="match status" value="1"/>
</dbReference>
<dbReference type="PROSITE" id="PS00152">
    <property type="entry name" value="ATPASE_ALPHA_BETA"/>
    <property type="match status" value="1"/>
</dbReference>
<comment type="function">
    <text evidence="1">Produces ATP from ADP in the presence of a proton gradient across the membrane. The alpha chain is a regulatory subunit.</text>
</comment>
<comment type="catalytic activity">
    <reaction evidence="1">
        <text>ATP + H2O + 4 H(+)(in) = ADP + phosphate + 5 H(+)(out)</text>
        <dbReference type="Rhea" id="RHEA:57720"/>
        <dbReference type="ChEBI" id="CHEBI:15377"/>
        <dbReference type="ChEBI" id="CHEBI:15378"/>
        <dbReference type="ChEBI" id="CHEBI:30616"/>
        <dbReference type="ChEBI" id="CHEBI:43474"/>
        <dbReference type="ChEBI" id="CHEBI:456216"/>
        <dbReference type="EC" id="7.1.2.2"/>
    </reaction>
</comment>
<comment type="subunit">
    <text evidence="1">F-type ATPases have 2 components, CF(1) - the catalytic core - and CF(0) - the membrane proton channel. CF(1) has five subunits: alpha(3), beta(3), gamma(1), delta(1), epsilon(1). CF(0) has three main subunits: a(1), b(2) and c(9-12). The alpha and beta chains form an alternating ring which encloses part of the gamma chain. CF(1) is attached to CF(0) by a central stalk formed by the gamma and epsilon chains, while a peripheral stalk is formed by the delta and b chains.</text>
</comment>
<comment type="subcellular location">
    <subcellularLocation>
        <location evidence="1">Cell inner membrane</location>
        <topology evidence="1">Peripheral membrane protein</topology>
    </subcellularLocation>
</comment>
<comment type="similarity">
    <text evidence="1">Belongs to the ATPase alpha/beta chains family.</text>
</comment>
<keyword id="KW-0066">ATP synthesis</keyword>
<keyword id="KW-0067">ATP-binding</keyword>
<keyword id="KW-0997">Cell inner membrane</keyword>
<keyword id="KW-1003">Cell membrane</keyword>
<keyword id="KW-0139">CF(1)</keyword>
<keyword id="KW-0375">Hydrogen ion transport</keyword>
<keyword id="KW-0406">Ion transport</keyword>
<keyword id="KW-0472">Membrane</keyword>
<keyword id="KW-0547">Nucleotide-binding</keyword>
<keyword id="KW-1278">Translocase</keyword>
<keyword id="KW-0813">Transport</keyword>
<sequence>MQQLNPSEISEIIKGRIEKLDVTSQARNEGTVVSVSDGIVRIHGLADVMYGEMIEFPGGVYGMALNLEQDSVGAVVLGAYTTLAEGMSAKCTGRILEVPVGKELLGRVVDALGNPVDGKGPLGNTETDAVEKVAPGVIWRKSVDQPVQTGYKAVDAMIPVGRGQRELIIGDRQIGKTALAIDAIINQKDSGIFCVYVAIGQKQSTIANVVRKLEENGALANTIIVAASASESAALQFLAPYSGCTMGEFFRDRGEDALIVYDDLSKQAVAYRQISLLLRRPPGREAYPGDVFYLHSRLLERASRVSEEYVEKFTNGAVTGKTGSLTALPIIETQAGDVSAFVPTNVISITDGQIFLESAMFNSGIRPAVNAGVSVSRVGGAAQTKIIKKLSGGIRTALAQYRELAAFAQFASDLDEATRKQLEHGQRVTELMKQKQYAPMSIADMSLSLYAAERGFLTDIEITKIGSFEQALIAFFNRDHADLMAKINVKGDFNDEIDAGLKAGIEKFKATQTW</sequence>
<reference key="1">
    <citation type="journal article" date="2009" name="Genome Biol.">
        <title>Genomic and genetic analyses of diversity and plant interactions of Pseudomonas fluorescens.</title>
        <authorList>
            <person name="Silby M.W."/>
            <person name="Cerdeno-Tarraga A.M."/>
            <person name="Vernikos G.S."/>
            <person name="Giddens S.R."/>
            <person name="Jackson R.W."/>
            <person name="Preston G.M."/>
            <person name="Zhang X.-X."/>
            <person name="Moon C.D."/>
            <person name="Gehrig S.M."/>
            <person name="Godfrey S.A.C."/>
            <person name="Knight C.G."/>
            <person name="Malone J.G."/>
            <person name="Robinson Z."/>
            <person name="Spiers A.J."/>
            <person name="Harris S."/>
            <person name="Challis G.L."/>
            <person name="Yaxley A.M."/>
            <person name="Harris D."/>
            <person name="Seeger K."/>
            <person name="Murphy L."/>
            <person name="Rutter S."/>
            <person name="Squares R."/>
            <person name="Quail M.A."/>
            <person name="Saunders E."/>
            <person name="Mavromatis K."/>
            <person name="Brettin T.S."/>
            <person name="Bentley S.D."/>
            <person name="Hothersall J."/>
            <person name="Stephens E."/>
            <person name="Thomas C.M."/>
            <person name="Parkhill J."/>
            <person name="Levy S.B."/>
            <person name="Rainey P.B."/>
            <person name="Thomson N.R."/>
        </authorList>
    </citation>
    <scope>NUCLEOTIDE SEQUENCE [LARGE SCALE GENOMIC DNA]</scope>
    <source>
        <strain>Pf0-1</strain>
    </source>
</reference>
<name>ATPA_PSEPF</name>
<feature type="chain" id="PRO_0000238329" description="ATP synthase subunit alpha">
    <location>
        <begin position="1"/>
        <end position="514"/>
    </location>
</feature>
<feature type="binding site" evidence="1">
    <location>
        <begin position="170"/>
        <end position="177"/>
    </location>
    <ligand>
        <name>ATP</name>
        <dbReference type="ChEBI" id="CHEBI:30616"/>
    </ligand>
</feature>
<feature type="site" description="Required for activity" evidence="1">
    <location>
        <position position="374"/>
    </location>
</feature>